<sequence>MKMRTIAKTSLALGLLTTGAITVTTQSVKAEKIQSTKVDKVPTLKAERLAMINITAGANSATTQAANTRQERTPKLEKAPNTNEEKTSASKIEKISQPKQEEQKTLNISATPAPKQEQSQTTTESTTPKTKVTTPPSTNTPQPMQSTKSDTPQSPTIKQAQTDMTPKYEDLRAYYTKPSFEFEKQFGFMLKPWTTVRFMNVIPNRFIYKIALVGKDEKKYKDGPYDNIDVFIVLEDNKYQLKKYSVGGITKTNSKKVNHKVELSITKKDNQGMISRDVSEYMITKEEISLKELDFKLRKQLIEKHNLYGNMGSGTIVIKMKNGGKYTFELHKKLQEHRMADVIDGTNIDNIEVNIK</sequence>
<protein>
    <recommendedName>
        <fullName evidence="7">Staphylococcal superantigen-like 3</fullName>
    </recommendedName>
</protein>
<accession>Q2G0X7</accession>
<gene>
    <name evidence="7" type="primary">ssl3</name>
    <name type="ordered locus">SAOUHSC_00386</name>
</gene>
<proteinExistence type="evidence at protein level"/>
<keyword id="KW-0002">3D-structure</keyword>
<keyword id="KW-1185">Reference proteome</keyword>
<keyword id="KW-0964">Secreted</keyword>
<keyword id="KW-0732">Signal</keyword>
<keyword id="KW-0843">Virulence</keyword>
<evidence type="ECO:0000255" key="1"/>
<evidence type="ECO:0000256" key="2">
    <source>
        <dbReference type="SAM" id="MobiDB-lite"/>
    </source>
</evidence>
<evidence type="ECO:0000269" key="3">
    <source>
    </source>
</evidence>
<evidence type="ECO:0000269" key="4">
    <source>
    </source>
</evidence>
<evidence type="ECO:0000269" key="5">
    <source>
    </source>
</evidence>
<evidence type="ECO:0000269" key="6">
    <source>
    </source>
</evidence>
<evidence type="ECO:0000303" key="7">
    <source>
    </source>
</evidence>
<evidence type="ECO:0000305" key="8"/>
<evidence type="ECO:0007829" key="9">
    <source>
        <dbReference type="PDB" id="5I4D"/>
    </source>
</evidence>
<feature type="signal peptide" evidence="1">
    <location>
        <begin position="1"/>
        <end position="30"/>
    </location>
</feature>
<feature type="chain" id="PRO_0000447509" description="Staphylococcal superantigen-like 3" evidence="1">
    <location>
        <begin position="31"/>
        <end position="356"/>
    </location>
</feature>
<feature type="region of interest" description="Disordered" evidence="2">
    <location>
        <begin position="61"/>
        <end position="165"/>
    </location>
</feature>
<feature type="region of interest" description="Sialyl Lewis X-binding" evidence="5">
    <location>
        <begin position="228"/>
        <end position="326"/>
    </location>
</feature>
<feature type="compositionally biased region" description="Basic and acidic residues" evidence="2">
    <location>
        <begin position="69"/>
        <end position="104"/>
    </location>
</feature>
<feature type="compositionally biased region" description="Low complexity" evidence="2">
    <location>
        <begin position="114"/>
        <end position="141"/>
    </location>
</feature>
<feature type="compositionally biased region" description="Polar residues" evidence="2">
    <location>
        <begin position="142"/>
        <end position="164"/>
    </location>
</feature>
<feature type="mutagenesis site" description="About 100-fold reduction in cytokine production, when associated with A-188." evidence="5">
    <original>F</original>
    <variation>A</variation>
    <location>
        <position position="186"/>
    </location>
</feature>
<feature type="mutagenesis site" description="About 100-fold reduction in cytokine production, when associated with A-188." evidence="5">
    <original>F</original>
    <variation>A</variation>
    <location>
        <position position="188"/>
    </location>
</feature>
<feature type="mutagenesis site" description="About 75% loss of human TLR2 binding." evidence="4">
    <original>R</original>
    <variation>A</variation>
    <location>
        <position position="338"/>
    </location>
</feature>
<feature type="helix" evidence="9">
    <location>
        <begin position="169"/>
        <end position="174"/>
    </location>
</feature>
<feature type="strand" evidence="9">
    <location>
        <begin position="180"/>
        <end position="189"/>
    </location>
</feature>
<feature type="strand" evidence="9">
    <location>
        <begin position="193"/>
        <end position="196"/>
    </location>
</feature>
<feature type="strand" evidence="9">
    <location>
        <begin position="198"/>
        <end position="201"/>
    </location>
</feature>
<feature type="strand" evidence="9">
    <location>
        <begin position="203"/>
        <end position="206"/>
    </location>
</feature>
<feature type="strand" evidence="9">
    <location>
        <begin position="208"/>
        <end position="211"/>
    </location>
</feature>
<feature type="helix" evidence="9">
    <location>
        <begin position="216"/>
        <end position="219"/>
    </location>
</feature>
<feature type="strand" evidence="9">
    <location>
        <begin position="225"/>
        <end position="232"/>
    </location>
</feature>
<feature type="strand" evidence="9">
    <location>
        <begin position="242"/>
        <end position="247"/>
    </location>
</feature>
<feature type="strand" evidence="9">
    <location>
        <begin position="249"/>
        <end position="251"/>
    </location>
</feature>
<feature type="strand" evidence="9">
    <location>
        <begin position="259"/>
        <end position="268"/>
    </location>
</feature>
<feature type="strand" evidence="9">
    <location>
        <begin position="274"/>
        <end position="283"/>
    </location>
</feature>
<feature type="strand" evidence="9">
    <location>
        <begin position="286"/>
        <end position="289"/>
    </location>
</feature>
<feature type="helix" evidence="9">
    <location>
        <begin position="290"/>
        <end position="305"/>
    </location>
</feature>
<feature type="turn" evidence="9">
    <location>
        <begin position="307"/>
        <end position="309"/>
    </location>
</feature>
<feature type="strand" evidence="9">
    <location>
        <begin position="314"/>
        <end position="320"/>
    </location>
</feature>
<feature type="strand" evidence="9">
    <location>
        <begin position="325"/>
        <end position="329"/>
    </location>
</feature>
<feature type="helix" evidence="9">
    <location>
        <begin position="336"/>
        <end position="340"/>
    </location>
</feature>
<feature type="strand" evidence="9">
    <location>
        <begin position="342"/>
        <end position="344"/>
    </location>
</feature>
<feature type="helix" evidence="9">
    <location>
        <begin position="345"/>
        <end position="347"/>
    </location>
</feature>
<feature type="strand" evidence="9">
    <location>
        <begin position="348"/>
        <end position="355"/>
    </location>
</feature>
<name>SSL3_STAA8</name>
<organism>
    <name type="scientific">Staphylococcus aureus (strain NCTC 8325 / PS 47)</name>
    <dbReference type="NCBI Taxonomy" id="93061"/>
    <lineage>
        <taxon>Bacteria</taxon>
        <taxon>Bacillati</taxon>
        <taxon>Bacillota</taxon>
        <taxon>Bacilli</taxon>
        <taxon>Bacillales</taxon>
        <taxon>Staphylococcaceae</taxon>
        <taxon>Staphylococcus</taxon>
    </lineage>
</organism>
<dbReference type="EMBL" id="CP000253">
    <property type="protein sequence ID" value="ABD29550.1"/>
    <property type="molecule type" value="Genomic_DNA"/>
</dbReference>
<dbReference type="RefSeq" id="WP_000784023.1">
    <property type="nucleotide sequence ID" value="NZ_LS483365.1"/>
</dbReference>
<dbReference type="RefSeq" id="YP_498973.1">
    <property type="nucleotide sequence ID" value="NC_007795.1"/>
</dbReference>
<dbReference type="PDB" id="5D3D">
    <property type="method" value="X-ray"/>
    <property type="resolution" value="1.94 A"/>
    <property type="chains" value="A/B=164-356"/>
</dbReference>
<dbReference type="PDB" id="5D3I">
    <property type="method" value="X-ray"/>
    <property type="resolution" value="3.20 A"/>
    <property type="chains" value="B=164-356"/>
</dbReference>
<dbReference type="PDB" id="5I4D">
    <property type="method" value="X-ray"/>
    <property type="resolution" value="1.75 A"/>
    <property type="chains" value="A/B=31-356"/>
</dbReference>
<dbReference type="PDBsum" id="5D3D"/>
<dbReference type="PDBsum" id="5D3I"/>
<dbReference type="PDBsum" id="5I4D"/>
<dbReference type="SMR" id="Q2G0X7"/>
<dbReference type="STRING" id="93061.SAOUHSC_00386"/>
<dbReference type="UniLectin" id="Q2G0X7"/>
<dbReference type="PaxDb" id="1280-SAXN108_0478"/>
<dbReference type="GeneID" id="3919122"/>
<dbReference type="KEGG" id="sao:SAOUHSC_00386"/>
<dbReference type="PATRIC" id="fig|93061.5.peg.355"/>
<dbReference type="HOGENOM" id="CLU_054950_1_0_9"/>
<dbReference type="OrthoDB" id="2413502at2"/>
<dbReference type="EvolutionaryTrace" id="Q2G0X7"/>
<dbReference type="PHI-base" id="PHI:9748"/>
<dbReference type="Proteomes" id="UP000008816">
    <property type="component" value="Chromosome"/>
</dbReference>
<dbReference type="GO" id="GO:0005576">
    <property type="term" value="C:extracellular region"/>
    <property type="evidence" value="ECO:0007669"/>
    <property type="project" value="UniProtKB-SubCell"/>
</dbReference>
<dbReference type="Gene3D" id="2.40.50.110">
    <property type="match status" value="1"/>
</dbReference>
<dbReference type="Gene3D" id="3.10.20.120">
    <property type="match status" value="1"/>
</dbReference>
<dbReference type="InterPro" id="IPR008992">
    <property type="entry name" value="Enterotoxin"/>
</dbReference>
<dbReference type="InterPro" id="IPR015282">
    <property type="entry name" value="SSL_OB"/>
</dbReference>
<dbReference type="InterPro" id="IPR006126">
    <property type="entry name" value="Staph/Strept_toxin_CS"/>
</dbReference>
<dbReference type="InterPro" id="IPR008375">
    <property type="entry name" value="Staph_exotoxin"/>
</dbReference>
<dbReference type="InterPro" id="IPR016091">
    <property type="entry name" value="SuperAg_toxin_C"/>
</dbReference>
<dbReference type="InterPro" id="IPR013307">
    <property type="entry name" value="Superantigen_bac"/>
</dbReference>
<dbReference type="InterPro" id="IPR006123">
    <property type="entry name" value="Toxin_b-grasp_Staph/Strep"/>
</dbReference>
<dbReference type="NCBIfam" id="NF009873">
    <property type="entry name" value="PRK13335.1"/>
    <property type="match status" value="1"/>
</dbReference>
<dbReference type="Pfam" id="PF09199">
    <property type="entry name" value="SSL_OB"/>
    <property type="match status" value="1"/>
</dbReference>
<dbReference type="Pfam" id="PF02876">
    <property type="entry name" value="Stap_Strp_tox_C"/>
    <property type="match status" value="1"/>
</dbReference>
<dbReference type="PRINTS" id="PR01898">
    <property type="entry name" value="SAGSUPRFAMLY"/>
</dbReference>
<dbReference type="PRINTS" id="PR01800">
    <property type="entry name" value="STAPHEXOTOXN"/>
</dbReference>
<dbReference type="SUPFAM" id="SSF50203">
    <property type="entry name" value="Bacterial enterotoxins"/>
    <property type="match status" value="1"/>
</dbReference>
<dbReference type="SUPFAM" id="SSF54334">
    <property type="entry name" value="Superantigen toxins, C-terminal domain"/>
    <property type="match status" value="1"/>
</dbReference>
<dbReference type="PROSITE" id="PS00278">
    <property type="entry name" value="STAPH_STREP_TOXIN_2"/>
    <property type="match status" value="1"/>
</dbReference>
<comment type="function">
    <text evidence="3 4 5">Secreted protein that plays an essential role in immune innate response inhibition by interacting with and inhibiting host TLR2. In turn, bacteria recognition by immune cells is impaired and cytokine production is inhibited (PubMed:22665377, PubMed:22714643). Mechanistically, by interacting with TLR2, blocks ligand binding and thus inhibits activation (PubMed:26283364). Second, by interacting with an already formed TLR2-lipopeptide complex, prevents TLR heterodimerization and downstream signaling. The interaction with host TLR2 does not involve sialyl Lewis X interactions (PubMed:26283364).</text>
</comment>
<comment type="subunit">
    <text evidence="3 4 5">Interacts with host TLR2 (via its extracellular domain).</text>
</comment>
<comment type="subcellular location">
    <subcellularLocation>
        <location evidence="6">Secreted</location>
    </subcellularLocation>
</comment>
<comment type="domain">
    <text evidence="5">The C-terminal domain contains a V-shape binding site for sialyl Lewis X.</text>
</comment>
<comment type="similarity">
    <text evidence="8">Belongs to the staphylococcal/streptococcal toxin family.</text>
</comment>
<reference key="1">
    <citation type="book" date="2006" name="Gram positive pathogens, 2nd edition">
        <title>The Staphylococcus aureus NCTC 8325 genome.</title>
        <editorList>
            <person name="Fischetti V."/>
            <person name="Novick R."/>
            <person name="Ferretti J."/>
            <person name="Portnoy D."/>
            <person name="Rood J."/>
        </editorList>
        <authorList>
            <person name="Gillaspy A.F."/>
            <person name="Worrell V."/>
            <person name="Orvis J."/>
            <person name="Roe B.A."/>
            <person name="Dyer D.W."/>
            <person name="Iandolo J.J."/>
        </authorList>
    </citation>
    <scope>NUCLEOTIDE SEQUENCE [LARGE SCALE GENOMIC DNA]</scope>
    <source>
        <strain>NCTC 8325 / PS 47</strain>
    </source>
</reference>
<reference key="2">
    <citation type="journal article" date="2012" name="Infect. Immun.">
        <title>Staphylococcal superantigen-like protein 3 binds to the Toll-like receptor 2 extracellular domain and inhibits cytokine production induced by Staphylococcus aureus, cell wall component, or lipopeptides in murine macrophages.</title>
        <authorList>
            <person name="Yokoyama R."/>
            <person name="Itoh S."/>
            <person name="Kamoshida G."/>
            <person name="Takii T."/>
            <person name="Fujii S."/>
            <person name="Tsuji T."/>
            <person name="Onozaki K."/>
        </authorList>
    </citation>
    <scope>FUNCTION</scope>
    <scope>INTERACTION WITH HOST TLR2</scope>
</reference>
<reference key="3">
    <citation type="journal article" date="2012" name="J. Mol. Med.">
        <title>Evasion of Toll-like receptor 2 activation by staphylococcal superantigen-like protein 3.</title>
        <authorList>
            <person name="Bardoel B.W."/>
            <person name="Vos R."/>
            <person name="Bouman T."/>
            <person name="Aerts P.C."/>
            <person name="Bestebroer J."/>
            <person name="Huizinga E.G."/>
            <person name="Brondijk T.H."/>
            <person name="van Strijp J.A."/>
            <person name="de Haas C.J."/>
        </authorList>
    </citation>
    <scope>FUNCTION</scope>
    <scope>INTERACTION WITH HOST TLR2</scope>
    <scope>MUTAGENESIS OF ARG-338</scope>
    <source>
        <strain>NCTC 8325 / PS 47</strain>
    </source>
</reference>
<reference key="4">
    <citation type="journal article" date="2017" name="J. Innate Immun.">
        <title>The TLR2 Antagonist Staphylococcal Superantigen-Like Protein 3 Acts as a Virulence Factor to Promote Bacterial Pathogenicity in vivo.</title>
        <authorList>
            <person name="Koymans K.J."/>
            <person name="Goldmann O."/>
            <person name="Karlsson C.A.Q."/>
            <person name="Sital W."/>
            <person name="Thaenert R."/>
            <person name="Bisschop A."/>
            <person name="Vrieling M."/>
            <person name="Malmstroem J."/>
            <person name="van Kessel K.P.M."/>
            <person name="de Haas C.J.C."/>
            <person name="van Strijp J.A.G."/>
            <person name="Medina E."/>
        </authorList>
    </citation>
    <scope>FUNCTION</scope>
    <scope>SUBCELLULAR LOCATION</scope>
    <source>
        <strain>NCTC 8325 / PS 47</strain>
    </source>
</reference>
<reference key="5">
    <citation type="journal article" date="2015" name="Proc. Natl. Acad. Sci. U.S.A.">
        <title>Structural basis for inhibition of TLR2 by staphylococcal superantigen-like protein 3 (SSL3).</title>
        <authorList>
            <person name="Koymans K.J."/>
            <person name="Feitsma L.J."/>
            <person name="Brondijk T.H."/>
            <person name="Aerts P.C."/>
            <person name="Lukkien E."/>
            <person name="Loessl P."/>
            <person name="van Kessel K.P."/>
            <person name="de Haas C.J."/>
            <person name="van Strijp J.A."/>
            <person name="Huizinga E.G."/>
        </authorList>
    </citation>
    <scope>X-RAY CRYSTALLOGRAPHY (1.94 ANGSTROMS) OF 164-356</scope>
    <scope>MUTAGENESIS OF PHE-186 AND PHE-188</scope>
    <scope>FUNCTION</scope>
    <scope>INTERACTION WITH HOST TLR2</scope>
    <scope>DOMAIN</scope>
</reference>
<reference key="6">
    <citation type="submission" date="2016-02" db="PDB data bank">
        <title>1.75 Angstrom Crystal Structure of Superantigen-like Protein, Exotoxin from Staphylococcus aureus, in Complex with Sialyl-LewisX.</title>
        <authorList>
            <consortium name="Center for Structural Genomics of Infectious Diseases (CSGID)"/>
            <person name="Minasov G."/>
            <person name="Nocadello S."/>
            <person name="Shuvalova L."/>
            <person name="Filippova E.V."/>
            <person name="Halavaty A."/>
            <person name="Dubrovska I."/>
            <person name="Bagnoli F."/>
            <person name="Falugi F."/>
            <person name="Bottomley M."/>
            <person name="Grandi G."/>
            <person name="Anderson W.F."/>
        </authorList>
    </citation>
    <scope>X-RAY CRYSTALLOGRAPHY (1.75 ANGSTROMS) OF 31-356</scope>
    <scope>DOMAIN</scope>
</reference>